<organism>
    <name type="scientific">Mus musculus</name>
    <name type="common">Mouse</name>
    <dbReference type="NCBI Taxonomy" id="10090"/>
    <lineage>
        <taxon>Eukaryota</taxon>
        <taxon>Metazoa</taxon>
        <taxon>Chordata</taxon>
        <taxon>Craniata</taxon>
        <taxon>Vertebrata</taxon>
        <taxon>Euteleostomi</taxon>
        <taxon>Mammalia</taxon>
        <taxon>Eutheria</taxon>
        <taxon>Euarchontoglires</taxon>
        <taxon>Glires</taxon>
        <taxon>Rodentia</taxon>
        <taxon>Myomorpha</taxon>
        <taxon>Muroidea</taxon>
        <taxon>Muridae</taxon>
        <taxon>Murinae</taxon>
        <taxon>Mus</taxon>
        <taxon>Mus</taxon>
    </lineage>
</organism>
<proteinExistence type="evidence at protein level"/>
<accession>Q91YI0</accession>
<accession>Q3UFA2</accession>
<comment type="function">
    <text evidence="1 3">Catalyzes the reversible cleavage of L-argininosuccinate to fumarate and L-arginine, an intermediate step reaction in the urea cycle mostly providing for hepatic nitrogen detoxification into excretable urea as well as de novo L-arginine synthesis in nonhepatic tissues (By similarity). Essential regulator of intracellular and extracellular L-arginine pools. As part of citrulline-nitric oxide cycle, forms tissue-specific multiprotein complexes with argininosuccinate synthase ASS1, transport protein SLC7A1 and nitric oxide synthase NOS1, NOS2 or NOS3, allowing for cell-autonomous L-arginine synthesis while channeling extracellular L-arginine to nitric oxide synthesis pathway (PubMed:22081021).</text>
</comment>
<comment type="catalytic activity">
    <reaction evidence="1">
        <text>2-(N(omega)-L-arginino)succinate = fumarate + L-arginine</text>
        <dbReference type="Rhea" id="RHEA:24020"/>
        <dbReference type="ChEBI" id="CHEBI:29806"/>
        <dbReference type="ChEBI" id="CHEBI:32682"/>
        <dbReference type="ChEBI" id="CHEBI:57472"/>
        <dbReference type="EC" id="4.3.2.1"/>
    </reaction>
    <physiologicalReaction direction="left-to-right" evidence="1">
        <dbReference type="Rhea" id="RHEA:24021"/>
    </physiologicalReaction>
    <physiologicalReaction direction="right-to-left" evidence="1">
        <dbReference type="Rhea" id="RHEA:24022"/>
    </physiologicalReaction>
</comment>
<comment type="activity regulation">
    <text evidence="1">Enzyme activity is regulated by acetylation.</text>
</comment>
<comment type="pathway">
    <text evidence="1">Amino-acid biosynthesis; L-arginine biosynthesis; L-arginine from L-ornithine and carbamoyl phosphate: step 3/3.</text>
</comment>
<comment type="pathway">
    <text evidence="1">Nitrogen metabolism; urea cycle; L-arginine and fumarate from (N(omega)-L-arginino)succinate: step 1/1.</text>
</comment>
<comment type="subunit">
    <text evidence="1 3">Homotetramer (By similarity). Forms tissue-specific complexes with ASS1, SLC7A1, HSP90AA1 and nitric oxide synthase NOS1, NOS2 or NOS3; the complex maintenance is independent of ASL catalytic function (PubMed:22081021).</text>
</comment>
<comment type="tissue specificity">
    <text evidence="3">Expressed in lung and brain (at protein level).</text>
</comment>
<comment type="PTM">
    <text evidence="1">Acetylation modifies enzyme activity in response to alterations of extracellular nutrient availability. Acetylation increased with trichostin A (TSA) or with nicotinamide (NAM). Glucose increases acetylation by about a factor of 3 with decreasing enzyme activity. Acetylation on Lys-288 is decreased on the addition of extra amino acids resulting in activation of enzyme activity.</text>
</comment>
<comment type="similarity">
    <text evidence="4">Belongs to the lyase 1 family. Argininosuccinate lyase subfamily.</text>
</comment>
<sequence length="464" mass="51739">MASESGKLWGGRFVGAVDPIMEKFNSSISYDRHLWNVDVQGSKAYSRGLEKAGLLTKAEMQQILQGLDKVAEEWAQGTFKLHPNDEDIHTANERRLKELIGEAAGKLHTGRSRNDQVVTDLRLWMRQTCSKLSALLRVLIGTMVDRAEAERDVLFPGYTHLQRAQPIRWSHWILSHAVALTRDSERLLEVQKRINVLPLGSGAIAGNPLGVDRELLRAELNFGAITLNSMDATSERDFVAEFLFWASLCMTHLSRMAEDLILYGTKEFSFVQLSDAYSTGSSLMPQKKNPDSLELIRSKAGRVFGRCAGLLMTLKGLPSTYNKDLQEDKEAVFEVSDTMIAVLQVATGVISTLQIHRENMKQALSPDMLATDLAYYLVRKGMPFRQAHEASGKAVFMAETKGVALNLLSLQELQTISPLFSGDVSHVWDYSHSVEQYSALGGTAKSSVEWQIRQVRALLQAQEP</sequence>
<keyword id="KW-0007">Acetylation</keyword>
<keyword id="KW-0028">Amino-acid biosynthesis</keyword>
<keyword id="KW-0055">Arginine biosynthesis</keyword>
<keyword id="KW-0456">Lyase</keyword>
<keyword id="KW-1185">Reference proteome</keyword>
<keyword id="KW-0835">Urea cycle</keyword>
<dbReference type="EC" id="4.3.2.1" evidence="1"/>
<dbReference type="EMBL" id="AK076453">
    <property type="protein sequence ID" value="BAC36348.1"/>
    <property type="molecule type" value="mRNA"/>
</dbReference>
<dbReference type="EMBL" id="AK140160">
    <property type="protein sequence ID" value="BAE24262.1"/>
    <property type="molecule type" value="mRNA"/>
</dbReference>
<dbReference type="EMBL" id="AK148764">
    <property type="protein sequence ID" value="BAE28659.1"/>
    <property type="molecule type" value="mRNA"/>
</dbReference>
<dbReference type="EMBL" id="AK168739">
    <property type="protein sequence ID" value="BAE40580.1"/>
    <property type="molecule type" value="mRNA"/>
</dbReference>
<dbReference type="EMBL" id="BC016670">
    <property type="protein sequence ID" value="AAH16670.1"/>
    <property type="molecule type" value="mRNA"/>
</dbReference>
<dbReference type="CCDS" id="CCDS51655.1"/>
<dbReference type="RefSeq" id="NP_598529.1">
    <property type="nucleotide sequence ID" value="NM_133768.5"/>
</dbReference>
<dbReference type="RefSeq" id="XP_006504404.1">
    <property type="nucleotide sequence ID" value="XM_006504341.5"/>
</dbReference>
<dbReference type="SMR" id="Q91YI0"/>
<dbReference type="BioGRID" id="225136">
    <property type="interactions" value="7"/>
</dbReference>
<dbReference type="FunCoup" id="Q91YI0">
    <property type="interactions" value="837"/>
</dbReference>
<dbReference type="STRING" id="10090.ENSMUSP00000124579"/>
<dbReference type="CarbonylDB" id="Q91YI0"/>
<dbReference type="GlyGen" id="Q91YI0">
    <property type="glycosylation" value="2 sites, 1 N-linked glycan (1 site), 1 O-linked glycan (1 site)"/>
</dbReference>
<dbReference type="iPTMnet" id="Q91YI0"/>
<dbReference type="MetOSite" id="Q91YI0"/>
<dbReference type="PhosphoSitePlus" id="Q91YI0"/>
<dbReference type="SwissPalm" id="Q91YI0"/>
<dbReference type="jPOST" id="Q91YI0"/>
<dbReference type="PaxDb" id="10090-ENSMUSP00000124274"/>
<dbReference type="ProteomicsDB" id="282021"/>
<dbReference type="Pumba" id="Q91YI0"/>
<dbReference type="DNASU" id="109900"/>
<dbReference type="Ensembl" id="ENSMUST00000159619.8">
    <property type="protein sequence ID" value="ENSMUSP00000123799.2"/>
    <property type="gene ID" value="ENSMUSG00000025533.16"/>
</dbReference>
<dbReference type="Ensembl" id="ENSMUST00000160129.8">
    <property type="protein sequence ID" value="ENSMUSP00000124579.2"/>
    <property type="gene ID" value="ENSMUSG00000025533.16"/>
</dbReference>
<dbReference type="Ensembl" id="ENSMUST00000161094.8">
    <property type="protein sequence ID" value="ENSMUSP00000124274.2"/>
    <property type="gene ID" value="ENSMUSG00000025533.16"/>
</dbReference>
<dbReference type="GeneID" id="109900"/>
<dbReference type="KEGG" id="mmu:109900"/>
<dbReference type="UCSC" id="uc008zty.1">
    <property type="organism name" value="mouse"/>
</dbReference>
<dbReference type="AGR" id="MGI:88084"/>
<dbReference type="CTD" id="435"/>
<dbReference type="MGI" id="MGI:88084">
    <property type="gene designation" value="Asl"/>
</dbReference>
<dbReference type="VEuPathDB" id="HostDB:ENSMUSG00000025533"/>
<dbReference type="eggNOG" id="KOG1316">
    <property type="taxonomic scope" value="Eukaryota"/>
</dbReference>
<dbReference type="GeneTree" id="ENSGT00950000183122"/>
<dbReference type="HOGENOM" id="CLU_027272_2_1_1"/>
<dbReference type="InParanoid" id="Q91YI0"/>
<dbReference type="OMA" id="DFAIEFC"/>
<dbReference type="OrthoDB" id="2561043at2759"/>
<dbReference type="PhylomeDB" id="Q91YI0"/>
<dbReference type="TreeFam" id="TF300656"/>
<dbReference type="Reactome" id="R-MMU-70635">
    <property type="pathway name" value="Urea cycle"/>
</dbReference>
<dbReference type="UniPathway" id="UPA00068">
    <property type="reaction ID" value="UER00114"/>
</dbReference>
<dbReference type="UniPathway" id="UPA00158">
    <property type="reaction ID" value="UER00273"/>
</dbReference>
<dbReference type="BioGRID-ORCS" id="109900">
    <property type="hits" value="1 hit in 76 CRISPR screens"/>
</dbReference>
<dbReference type="ChiTaRS" id="Asl">
    <property type="organism name" value="mouse"/>
</dbReference>
<dbReference type="PRO" id="PR:Q91YI0"/>
<dbReference type="Proteomes" id="UP000000589">
    <property type="component" value="Chromosome 5"/>
</dbReference>
<dbReference type="RNAct" id="Q91YI0">
    <property type="molecule type" value="protein"/>
</dbReference>
<dbReference type="Bgee" id="ENSMUSG00000025533">
    <property type="expression patterns" value="Expressed in left lobe of liver and 251 other cell types or tissues"/>
</dbReference>
<dbReference type="ExpressionAtlas" id="Q91YI0">
    <property type="expression patterns" value="baseline and differential"/>
</dbReference>
<dbReference type="GO" id="GO:0004056">
    <property type="term" value="F:argininosuccinate lyase activity"/>
    <property type="evidence" value="ECO:0000250"/>
    <property type="project" value="UniProtKB"/>
</dbReference>
<dbReference type="GO" id="GO:0042802">
    <property type="term" value="F:identical protein binding"/>
    <property type="evidence" value="ECO:0007669"/>
    <property type="project" value="Ensembl"/>
</dbReference>
<dbReference type="GO" id="GO:0006520">
    <property type="term" value="P:amino acid metabolic process"/>
    <property type="evidence" value="ECO:0000315"/>
    <property type="project" value="MGI"/>
</dbReference>
<dbReference type="GO" id="GO:0019676">
    <property type="term" value="P:ammonia assimilation cycle"/>
    <property type="evidence" value="ECO:0000315"/>
    <property type="project" value="MGI"/>
</dbReference>
<dbReference type="GO" id="GO:0042450">
    <property type="term" value="P:arginine biosynthetic process via ornithine"/>
    <property type="evidence" value="ECO:0007669"/>
    <property type="project" value="InterPro"/>
</dbReference>
<dbReference type="GO" id="GO:0006526">
    <property type="term" value="P:L-arginine biosynthetic process"/>
    <property type="evidence" value="ECO:0000315"/>
    <property type="project" value="UniProtKB"/>
</dbReference>
<dbReference type="GO" id="GO:0007626">
    <property type="term" value="P:locomotory behavior"/>
    <property type="evidence" value="ECO:0000315"/>
    <property type="project" value="MGI"/>
</dbReference>
<dbReference type="GO" id="GO:0045429">
    <property type="term" value="P:positive regulation of nitric oxide biosynthetic process"/>
    <property type="evidence" value="ECO:0000315"/>
    <property type="project" value="UniProtKB"/>
</dbReference>
<dbReference type="GO" id="GO:0009791">
    <property type="term" value="P:post-embryonic development"/>
    <property type="evidence" value="ECO:0000315"/>
    <property type="project" value="MGI"/>
</dbReference>
<dbReference type="GO" id="GO:0000050">
    <property type="term" value="P:urea cycle"/>
    <property type="evidence" value="ECO:0007669"/>
    <property type="project" value="UniProtKB-UniPathway"/>
</dbReference>
<dbReference type="CDD" id="cd01359">
    <property type="entry name" value="Argininosuccinate_lyase"/>
    <property type="match status" value="1"/>
</dbReference>
<dbReference type="FunFam" id="1.10.40.30:FF:000001">
    <property type="entry name" value="Argininosuccinate lyase"/>
    <property type="match status" value="1"/>
</dbReference>
<dbReference type="FunFam" id="1.20.200.10:FF:000015">
    <property type="entry name" value="argininosuccinate lyase isoform X2"/>
    <property type="match status" value="2"/>
</dbReference>
<dbReference type="FunFam" id="1.10.275.10:FF:000014">
    <property type="entry name" value="Os03g0824900 protein"/>
    <property type="match status" value="1"/>
</dbReference>
<dbReference type="Gene3D" id="1.10.40.30">
    <property type="entry name" value="Fumarase/aspartase (C-terminal domain)"/>
    <property type="match status" value="1"/>
</dbReference>
<dbReference type="Gene3D" id="1.20.200.10">
    <property type="entry name" value="Fumarase/aspartase (Central domain)"/>
    <property type="match status" value="1"/>
</dbReference>
<dbReference type="Gene3D" id="1.10.275.10">
    <property type="entry name" value="Fumarase/aspartase (N-terminal domain)"/>
    <property type="match status" value="1"/>
</dbReference>
<dbReference type="HAMAP" id="MF_00006">
    <property type="entry name" value="Arg_succ_lyase"/>
    <property type="match status" value="1"/>
</dbReference>
<dbReference type="InterPro" id="IPR029419">
    <property type="entry name" value="Arg_succ_lyase_C"/>
</dbReference>
<dbReference type="InterPro" id="IPR009049">
    <property type="entry name" value="Argininosuccinate_lyase"/>
</dbReference>
<dbReference type="InterPro" id="IPR024083">
    <property type="entry name" value="Fumarase/histidase_N"/>
</dbReference>
<dbReference type="InterPro" id="IPR020557">
    <property type="entry name" value="Fumarate_lyase_CS"/>
</dbReference>
<dbReference type="InterPro" id="IPR000362">
    <property type="entry name" value="Fumarate_lyase_fam"/>
</dbReference>
<dbReference type="InterPro" id="IPR022761">
    <property type="entry name" value="Fumarate_lyase_N"/>
</dbReference>
<dbReference type="InterPro" id="IPR008948">
    <property type="entry name" value="L-Aspartase-like"/>
</dbReference>
<dbReference type="NCBIfam" id="TIGR00838">
    <property type="entry name" value="argH"/>
    <property type="match status" value="1"/>
</dbReference>
<dbReference type="PANTHER" id="PTHR43814">
    <property type="entry name" value="ARGININOSUCCINATE LYASE"/>
    <property type="match status" value="1"/>
</dbReference>
<dbReference type="PANTHER" id="PTHR43814:SF1">
    <property type="entry name" value="ARGININOSUCCINATE LYASE"/>
    <property type="match status" value="1"/>
</dbReference>
<dbReference type="Pfam" id="PF14698">
    <property type="entry name" value="ASL_C2"/>
    <property type="match status" value="1"/>
</dbReference>
<dbReference type="Pfam" id="PF00206">
    <property type="entry name" value="Lyase_1"/>
    <property type="match status" value="1"/>
</dbReference>
<dbReference type="PRINTS" id="PR00145">
    <property type="entry name" value="ARGSUCLYASE"/>
</dbReference>
<dbReference type="PRINTS" id="PR00149">
    <property type="entry name" value="FUMRATELYASE"/>
</dbReference>
<dbReference type="SUPFAM" id="SSF48557">
    <property type="entry name" value="L-aspartase-like"/>
    <property type="match status" value="1"/>
</dbReference>
<dbReference type="PROSITE" id="PS00163">
    <property type="entry name" value="FUMARATE_LYASES"/>
    <property type="match status" value="1"/>
</dbReference>
<evidence type="ECO:0000250" key="1">
    <source>
        <dbReference type="UniProtKB" id="P04424"/>
    </source>
</evidence>
<evidence type="ECO:0000250" key="2">
    <source>
        <dbReference type="UniProtKB" id="P24058"/>
    </source>
</evidence>
<evidence type="ECO:0000269" key="3">
    <source>
    </source>
</evidence>
<evidence type="ECO:0000305" key="4"/>
<evidence type="ECO:0007744" key="5">
    <source>
    </source>
</evidence>
<gene>
    <name type="primary">Asl</name>
</gene>
<reference key="1">
    <citation type="journal article" date="2005" name="Science">
        <title>The transcriptional landscape of the mammalian genome.</title>
        <authorList>
            <person name="Carninci P."/>
            <person name="Kasukawa T."/>
            <person name="Katayama S."/>
            <person name="Gough J."/>
            <person name="Frith M.C."/>
            <person name="Maeda N."/>
            <person name="Oyama R."/>
            <person name="Ravasi T."/>
            <person name="Lenhard B."/>
            <person name="Wells C."/>
            <person name="Kodzius R."/>
            <person name="Shimokawa K."/>
            <person name="Bajic V.B."/>
            <person name="Brenner S.E."/>
            <person name="Batalov S."/>
            <person name="Forrest A.R."/>
            <person name="Zavolan M."/>
            <person name="Davis M.J."/>
            <person name="Wilming L.G."/>
            <person name="Aidinis V."/>
            <person name="Allen J.E."/>
            <person name="Ambesi-Impiombato A."/>
            <person name="Apweiler R."/>
            <person name="Aturaliya R.N."/>
            <person name="Bailey T.L."/>
            <person name="Bansal M."/>
            <person name="Baxter L."/>
            <person name="Beisel K.W."/>
            <person name="Bersano T."/>
            <person name="Bono H."/>
            <person name="Chalk A.M."/>
            <person name="Chiu K.P."/>
            <person name="Choudhary V."/>
            <person name="Christoffels A."/>
            <person name="Clutterbuck D.R."/>
            <person name="Crowe M.L."/>
            <person name="Dalla E."/>
            <person name="Dalrymple B.P."/>
            <person name="de Bono B."/>
            <person name="Della Gatta G."/>
            <person name="di Bernardo D."/>
            <person name="Down T."/>
            <person name="Engstrom P."/>
            <person name="Fagiolini M."/>
            <person name="Faulkner G."/>
            <person name="Fletcher C.F."/>
            <person name="Fukushima T."/>
            <person name="Furuno M."/>
            <person name="Futaki S."/>
            <person name="Gariboldi M."/>
            <person name="Georgii-Hemming P."/>
            <person name="Gingeras T.R."/>
            <person name="Gojobori T."/>
            <person name="Green R.E."/>
            <person name="Gustincich S."/>
            <person name="Harbers M."/>
            <person name="Hayashi Y."/>
            <person name="Hensch T.K."/>
            <person name="Hirokawa N."/>
            <person name="Hill D."/>
            <person name="Huminiecki L."/>
            <person name="Iacono M."/>
            <person name="Ikeo K."/>
            <person name="Iwama A."/>
            <person name="Ishikawa T."/>
            <person name="Jakt M."/>
            <person name="Kanapin A."/>
            <person name="Katoh M."/>
            <person name="Kawasawa Y."/>
            <person name="Kelso J."/>
            <person name="Kitamura H."/>
            <person name="Kitano H."/>
            <person name="Kollias G."/>
            <person name="Krishnan S.P."/>
            <person name="Kruger A."/>
            <person name="Kummerfeld S.K."/>
            <person name="Kurochkin I.V."/>
            <person name="Lareau L.F."/>
            <person name="Lazarevic D."/>
            <person name="Lipovich L."/>
            <person name="Liu J."/>
            <person name="Liuni S."/>
            <person name="McWilliam S."/>
            <person name="Madan Babu M."/>
            <person name="Madera M."/>
            <person name="Marchionni L."/>
            <person name="Matsuda H."/>
            <person name="Matsuzawa S."/>
            <person name="Miki H."/>
            <person name="Mignone F."/>
            <person name="Miyake S."/>
            <person name="Morris K."/>
            <person name="Mottagui-Tabar S."/>
            <person name="Mulder N."/>
            <person name="Nakano N."/>
            <person name="Nakauchi H."/>
            <person name="Ng P."/>
            <person name="Nilsson R."/>
            <person name="Nishiguchi S."/>
            <person name="Nishikawa S."/>
            <person name="Nori F."/>
            <person name="Ohara O."/>
            <person name="Okazaki Y."/>
            <person name="Orlando V."/>
            <person name="Pang K.C."/>
            <person name="Pavan W.J."/>
            <person name="Pavesi G."/>
            <person name="Pesole G."/>
            <person name="Petrovsky N."/>
            <person name="Piazza S."/>
            <person name="Reed J."/>
            <person name="Reid J.F."/>
            <person name="Ring B.Z."/>
            <person name="Ringwald M."/>
            <person name="Rost B."/>
            <person name="Ruan Y."/>
            <person name="Salzberg S.L."/>
            <person name="Sandelin A."/>
            <person name="Schneider C."/>
            <person name="Schoenbach C."/>
            <person name="Sekiguchi K."/>
            <person name="Semple C.A."/>
            <person name="Seno S."/>
            <person name="Sessa L."/>
            <person name="Sheng Y."/>
            <person name="Shibata Y."/>
            <person name="Shimada H."/>
            <person name="Shimada K."/>
            <person name="Silva D."/>
            <person name="Sinclair B."/>
            <person name="Sperling S."/>
            <person name="Stupka E."/>
            <person name="Sugiura K."/>
            <person name="Sultana R."/>
            <person name="Takenaka Y."/>
            <person name="Taki K."/>
            <person name="Tammoja K."/>
            <person name="Tan S.L."/>
            <person name="Tang S."/>
            <person name="Taylor M.S."/>
            <person name="Tegner J."/>
            <person name="Teichmann S.A."/>
            <person name="Ueda H.R."/>
            <person name="van Nimwegen E."/>
            <person name="Verardo R."/>
            <person name="Wei C.L."/>
            <person name="Yagi K."/>
            <person name="Yamanishi H."/>
            <person name="Zabarovsky E."/>
            <person name="Zhu S."/>
            <person name="Zimmer A."/>
            <person name="Hide W."/>
            <person name="Bult C."/>
            <person name="Grimmond S.M."/>
            <person name="Teasdale R.D."/>
            <person name="Liu E.T."/>
            <person name="Brusic V."/>
            <person name="Quackenbush J."/>
            <person name="Wahlestedt C."/>
            <person name="Mattick J.S."/>
            <person name="Hume D.A."/>
            <person name="Kai C."/>
            <person name="Sasaki D."/>
            <person name="Tomaru Y."/>
            <person name="Fukuda S."/>
            <person name="Kanamori-Katayama M."/>
            <person name="Suzuki M."/>
            <person name="Aoki J."/>
            <person name="Arakawa T."/>
            <person name="Iida J."/>
            <person name="Imamura K."/>
            <person name="Itoh M."/>
            <person name="Kato T."/>
            <person name="Kawaji H."/>
            <person name="Kawagashira N."/>
            <person name="Kawashima T."/>
            <person name="Kojima M."/>
            <person name="Kondo S."/>
            <person name="Konno H."/>
            <person name="Nakano K."/>
            <person name="Ninomiya N."/>
            <person name="Nishio T."/>
            <person name="Okada M."/>
            <person name="Plessy C."/>
            <person name="Shibata K."/>
            <person name="Shiraki T."/>
            <person name="Suzuki S."/>
            <person name="Tagami M."/>
            <person name="Waki K."/>
            <person name="Watahiki A."/>
            <person name="Okamura-Oho Y."/>
            <person name="Suzuki H."/>
            <person name="Kawai J."/>
            <person name="Hayashizaki Y."/>
        </authorList>
    </citation>
    <scope>NUCLEOTIDE SEQUENCE [LARGE SCALE MRNA]</scope>
    <source>
        <strain>C57BL/6J</strain>
        <tissue>Corpora quadrigemina</tissue>
        <tissue>Head</tissue>
        <tissue>Liver</tissue>
        <tissue>Sympathetic ganglion</tissue>
    </source>
</reference>
<reference key="2">
    <citation type="journal article" date="2004" name="Genome Res.">
        <title>The status, quality, and expansion of the NIH full-length cDNA project: the Mammalian Gene Collection (MGC).</title>
        <authorList>
            <consortium name="The MGC Project Team"/>
        </authorList>
    </citation>
    <scope>NUCLEOTIDE SEQUENCE [LARGE SCALE MRNA]</scope>
</reference>
<reference key="3">
    <citation type="journal article" date="2010" name="Cell">
        <title>A tissue-specific atlas of mouse protein phosphorylation and expression.</title>
        <authorList>
            <person name="Huttlin E.L."/>
            <person name="Jedrychowski M.P."/>
            <person name="Elias J.E."/>
            <person name="Goswami T."/>
            <person name="Rad R."/>
            <person name="Beausoleil S.A."/>
            <person name="Villen J."/>
            <person name="Haas W."/>
            <person name="Sowa M.E."/>
            <person name="Gygi S.P."/>
        </authorList>
    </citation>
    <scope>IDENTIFICATION BY MASS SPECTROMETRY [LARGE SCALE ANALYSIS]</scope>
    <source>
        <tissue>Brain</tissue>
        <tissue>Brown adipose tissue</tissue>
        <tissue>Heart</tissue>
        <tissue>Kidney</tissue>
        <tissue>Liver</tissue>
        <tissue>Lung</tissue>
        <tissue>Pancreas</tissue>
        <tissue>Spleen</tissue>
        <tissue>Testis</tissue>
    </source>
</reference>
<reference key="4">
    <citation type="journal article" date="2011" name="Nat. Med.">
        <title>Requirement of argininosuccinate lyase for systemic nitric oxide production.</title>
        <authorList>
            <person name="Erez A."/>
            <person name="Nagamani S.C."/>
            <person name="Shchelochkov O.A."/>
            <person name="Premkumar M.H."/>
            <person name="Campeau P.M."/>
            <person name="Chen Y."/>
            <person name="Garg H.K."/>
            <person name="Li L."/>
            <person name="Mian A."/>
            <person name="Bertin T.K."/>
            <person name="Black J.O."/>
            <person name="Zeng H."/>
            <person name="Tang Y."/>
            <person name="Reddy A.K."/>
            <person name="Summar M."/>
            <person name="O'Brien W.E."/>
            <person name="Harrison D.G."/>
            <person name="Mitch W.E."/>
            <person name="Marini J.C."/>
            <person name="Aschner J.L."/>
            <person name="Bryan N.S."/>
            <person name="Lee B."/>
        </authorList>
    </citation>
    <scope>FUNCTION</scope>
    <scope>TISSUE SPECIFICITY</scope>
    <scope>INTERACTION WITH ASS1; SLC7A1; HSP90AA1; NOS1; NOS2 AND NOS3</scope>
</reference>
<reference key="5">
    <citation type="journal article" date="2013" name="Mol. Cell">
        <title>SIRT5-mediated lysine desuccinylation impacts diverse metabolic pathways.</title>
        <authorList>
            <person name="Park J."/>
            <person name="Chen Y."/>
            <person name="Tishkoff D.X."/>
            <person name="Peng C."/>
            <person name="Tan M."/>
            <person name="Dai L."/>
            <person name="Xie Z."/>
            <person name="Zhang Y."/>
            <person name="Zwaans B.M."/>
            <person name="Skinner M.E."/>
            <person name="Lombard D.B."/>
            <person name="Zhao Y."/>
        </authorList>
    </citation>
    <scope>ACETYLATION [LARGE SCALE ANALYSIS] AT ALA-2 AND LYS-7</scope>
    <scope>CLEAVAGE OF INITIATOR METHIONINE [LARGE SCALE ANALYSIS]</scope>
    <scope>IDENTIFICATION BY MASS SPECTROMETRY [LARGE SCALE ANALYSIS]</scope>
    <source>
        <tissue>Embryonic fibroblast</tissue>
    </source>
</reference>
<name>ARLY_MOUSE</name>
<feature type="initiator methionine" description="Removed" evidence="5">
    <location>
        <position position="1"/>
    </location>
</feature>
<feature type="chain" id="PRO_0000137714" description="Argininosuccinate lyase">
    <location>
        <begin position="2"/>
        <end position="464"/>
    </location>
</feature>
<feature type="active site" description="Proton acceptor" evidence="2">
    <location>
        <position position="160"/>
    </location>
</feature>
<feature type="active site" description="Proton donor" evidence="2">
    <location>
        <position position="281"/>
    </location>
</feature>
<feature type="binding site" description="in chain A" evidence="2">
    <location>
        <position position="27"/>
    </location>
    <ligand>
        <name>2-(N(omega)-L-arginino)succinate</name>
        <dbReference type="ChEBI" id="CHEBI:57472"/>
        <note>ligand shared between tetrameric partners</note>
    </ligand>
</feature>
<feature type="binding site" description="in chain A" evidence="2">
    <location>
        <position position="114"/>
    </location>
    <ligand>
        <name>2-(N(omega)-L-arginino)succinate</name>
        <dbReference type="ChEBI" id="CHEBI:57472"/>
        <note>ligand shared between tetrameric partners</note>
    </ligand>
</feature>
<feature type="binding site" description="in chain C" evidence="2">
    <location>
        <position position="159"/>
    </location>
    <ligand>
        <name>2-(N(omega)-L-arginino)succinate</name>
        <dbReference type="ChEBI" id="CHEBI:57472"/>
        <note>ligand shared between tetrameric partners</note>
    </ligand>
</feature>
<feature type="binding site" description="in chain B" evidence="2">
    <location>
        <position position="289"/>
    </location>
    <ligand>
        <name>2-(N(omega)-L-arginino)succinate</name>
        <dbReference type="ChEBI" id="CHEBI:57472"/>
        <note>ligand shared between tetrameric partners</note>
    </ligand>
</feature>
<feature type="binding site" description="in chain A" evidence="2">
    <location>
        <position position="321"/>
    </location>
    <ligand>
        <name>2-(N(omega)-L-arginino)succinate</name>
        <dbReference type="ChEBI" id="CHEBI:57472"/>
        <note>ligand shared between tetrameric partners</note>
    </ligand>
</feature>
<feature type="binding site" description="in chain A" evidence="2">
    <location>
        <position position="326"/>
    </location>
    <ligand>
        <name>2-(N(omega)-L-arginino)succinate</name>
        <dbReference type="ChEBI" id="CHEBI:57472"/>
        <note>ligand shared between tetrameric partners</note>
    </ligand>
</feature>
<feature type="binding site" description="in chain A" evidence="2">
    <location>
        <position position="329"/>
    </location>
    <ligand>
        <name>2-(N(omega)-L-arginino)succinate</name>
        <dbReference type="ChEBI" id="CHEBI:57472"/>
        <note>ligand shared between tetrameric partners</note>
    </ligand>
</feature>
<feature type="site" description="Increases basicity of active site His" evidence="2">
    <location>
        <position position="294"/>
    </location>
</feature>
<feature type="modified residue" description="N-acetylalanine" evidence="5">
    <location>
        <position position="2"/>
    </location>
</feature>
<feature type="modified residue" description="N6-acetyllysine" evidence="5">
    <location>
        <position position="7"/>
    </location>
</feature>
<feature type="modified residue" description="N6-acetyllysine" evidence="1">
    <location>
        <position position="69"/>
    </location>
</feature>
<feature type="modified residue" description="N6-acetyllysine" evidence="1">
    <location>
        <position position="288"/>
    </location>
</feature>
<protein>
    <recommendedName>
        <fullName>Argininosuccinate lyase</fullName>
        <shortName>ASAL</shortName>
        <ecNumber evidence="1">4.3.2.1</ecNumber>
    </recommendedName>
    <alternativeName>
        <fullName>Arginosuccinase</fullName>
    </alternativeName>
</protein>